<evidence type="ECO:0000255" key="1">
    <source>
        <dbReference type="HAMAP-Rule" id="MF_00580"/>
    </source>
</evidence>
<gene>
    <name evidence="1" type="primary">groES</name>
    <name evidence="1" type="synonym">groS</name>
    <name type="ordered locus">lpp0742</name>
</gene>
<protein>
    <recommendedName>
        <fullName evidence="1">Co-chaperonin GroES</fullName>
    </recommendedName>
    <alternativeName>
        <fullName evidence="1">10 kDa chaperonin</fullName>
    </alternativeName>
    <alternativeName>
        <fullName evidence="1">Chaperonin-10</fullName>
        <shortName evidence="1">Cpn10</shortName>
    </alternativeName>
</protein>
<proteinExistence type="inferred from homology"/>
<sequence>MKIRPLHDRVVVRRMEEERTTAGGIVIPDSATEKPMRGEIIAVGAGKVLENGDVRALAVKVGDVVLFGKYSGTEVKVDGKELVVMREDDIMGVIEK</sequence>
<dbReference type="EMBL" id="CR628336">
    <property type="protein sequence ID" value="CAH11890.1"/>
    <property type="molecule type" value="Genomic_DNA"/>
</dbReference>
<dbReference type="RefSeq" id="WP_010946424.1">
    <property type="nucleotide sequence ID" value="NC_006368.1"/>
</dbReference>
<dbReference type="SMR" id="Q5X763"/>
<dbReference type="GeneID" id="57034680"/>
<dbReference type="KEGG" id="lpp:lpp0742"/>
<dbReference type="LegioList" id="lpp0742"/>
<dbReference type="HOGENOM" id="CLU_132825_2_0_6"/>
<dbReference type="GO" id="GO:0005737">
    <property type="term" value="C:cytoplasm"/>
    <property type="evidence" value="ECO:0007669"/>
    <property type="project" value="UniProtKB-SubCell"/>
</dbReference>
<dbReference type="GO" id="GO:0005524">
    <property type="term" value="F:ATP binding"/>
    <property type="evidence" value="ECO:0007669"/>
    <property type="project" value="InterPro"/>
</dbReference>
<dbReference type="GO" id="GO:0046872">
    <property type="term" value="F:metal ion binding"/>
    <property type="evidence" value="ECO:0007669"/>
    <property type="project" value="TreeGrafter"/>
</dbReference>
<dbReference type="GO" id="GO:0044183">
    <property type="term" value="F:protein folding chaperone"/>
    <property type="evidence" value="ECO:0007669"/>
    <property type="project" value="InterPro"/>
</dbReference>
<dbReference type="GO" id="GO:0051087">
    <property type="term" value="F:protein-folding chaperone binding"/>
    <property type="evidence" value="ECO:0007669"/>
    <property type="project" value="TreeGrafter"/>
</dbReference>
<dbReference type="GO" id="GO:0051082">
    <property type="term" value="F:unfolded protein binding"/>
    <property type="evidence" value="ECO:0007669"/>
    <property type="project" value="TreeGrafter"/>
</dbReference>
<dbReference type="GO" id="GO:0051085">
    <property type="term" value="P:chaperone cofactor-dependent protein refolding"/>
    <property type="evidence" value="ECO:0007669"/>
    <property type="project" value="TreeGrafter"/>
</dbReference>
<dbReference type="CDD" id="cd00320">
    <property type="entry name" value="cpn10"/>
    <property type="match status" value="1"/>
</dbReference>
<dbReference type="FunFam" id="2.30.33.40:FF:000001">
    <property type="entry name" value="10 kDa chaperonin"/>
    <property type="match status" value="1"/>
</dbReference>
<dbReference type="Gene3D" id="2.30.33.40">
    <property type="entry name" value="GroES chaperonin"/>
    <property type="match status" value="1"/>
</dbReference>
<dbReference type="HAMAP" id="MF_00580">
    <property type="entry name" value="CH10"/>
    <property type="match status" value="1"/>
</dbReference>
<dbReference type="InterPro" id="IPR020818">
    <property type="entry name" value="Chaperonin_GroES"/>
</dbReference>
<dbReference type="InterPro" id="IPR037124">
    <property type="entry name" value="Chaperonin_GroES_sf"/>
</dbReference>
<dbReference type="InterPro" id="IPR018369">
    <property type="entry name" value="Chaprnonin_Cpn10_CS"/>
</dbReference>
<dbReference type="InterPro" id="IPR011032">
    <property type="entry name" value="GroES-like_sf"/>
</dbReference>
<dbReference type="NCBIfam" id="NF001527">
    <property type="entry name" value="PRK00364.1-2"/>
    <property type="match status" value="1"/>
</dbReference>
<dbReference type="NCBIfam" id="NF001529">
    <property type="entry name" value="PRK00364.1-5"/>
    <property type="match status" value="1"/>
</dbReference>
<dbReference type="NCBIfam" id="NF001531">
    <property type="entry name" value="PRK00364.2-2"/>
    <property type="match status" value="1"/>
</dbReference>
<dbReference type="NCBIfam" id="NF001533">
    <property type="entry name" value="PRK00364.2-4"/>
    <property type="match status" value="1"/>
</dbReference>
<dbReference type="NCBIfam" id="NF001534">
    <property type="entry name" value="PRK00364.2-5"/>
    <property type="match status" value="1"/>
</dbReference>
<dbReference type="PANTHER" id="PTHR10772">
    <property type="entry name" value="10 KDA HEAT SHOCK PROTEIN"/>
    <property type="match status" value="1"/>
</dbReference>
<dbReference type="PANTHER" id="PTHR10772:SF58">
    <property type="entry name" value="CO-CHAPERONIN GROES"/>
    <property type="match status" value="1"/>
</dbReference>
<dbReference type="Pfam" id="PF00166">
    <property type="entry name" value="Cpn10"/>
    <property type="match status" value="1"/>
</dbReference>
<dbReference type="PRINTS" id="PR00297">
    <property type="entry name" value="CHAPERONIN10"/>
</dbReference>
<dbReference type="SMART" id="SM00883">
    <property type="entry name" value="Cpn10"/>
    <property type="match status" value="1"/>
</dbReference>
<dbReference type="SUPFAM" id="SSF50129">
    <property type="entry name" value="GroES-like"/>
    <property type="match status" value="1"/>
</dbReference>
<dbReference type="PROSITE" id="PS00681">
    <property type="entry name" value="CHAPERONINS_CPN10"/>
    <property type="match status" value="1"/>
</dbReference>
<keyword id="KW-0143">Chaperone</keyword>
<keyword id="KW-0963">Cytoplasm</keyword>
<keyword id="KW-0346">Stress response</keyword>
<comment type="function">
    <text evidence="1">Together with the chaperonin GroEL, plays an essential role in assisting protein folding. The GroEL-GroES system forms a nano-cage that allows encapsulation of the non-native substrate proteins and provides a physical environment optimized to promote and accelerate protein folding. GroES binds to the apical surface of the GroEL ring, thereby capping the opening of the GroEL channel.</text>
</comment>
<comment type="subunit">
    <text evidence="1">Heptamer of 7 subunits arranged in a ring. Interacts with the chaperonin GroEL.</text>
</comment>
<comment type="subcellular location">
    <subcellularLocation>
        <location evidence="1">Cytoplasm</location>
    </subcellularLocation>
</comment>
<comment type="similarity">
    <text evidence="1">Belongs to the GroES chaperonin family.</text>
</comment>
<organism>
    <name type="scientific">Legionella pneumophila (strain Paris)</name>
    <dbReference type="NCBI Taxonomy" id="297246"/>
    <lineage>
        <taxon>Bacteria</taxon>
        <taxon>Pseudomonadati</taxon>
        <taxon>Pseudomonadota</taxon>
        <taxon>Gammaproteobacteria</taxon>
        <taxon>Legionellales</taxon>
        <taxon>Legionellaceae</taxon>
        <taxon>Legionella</taxon>
    </lineage>
</organism>
<reference key="1">
    <citation type="journal article" date="2004" name="Nat. Genet.">
        <title>Evidence in the Legionella pneumophila genome for exploitation of host cell functions and high genome plasticity.</title>
        <authorList>
            <person name="Cazalet C."/>
            <person name="Rusniok C."/>
            <person name="Brueggemann H."/>
            <person name="Zidane N."/>
            <person name="Magnier A."/>
            <person name="Ma L."/>
            <person name="Tichit M."/>
            <person name="Jarraud S."/>
            <person name="Bouchier C."/>
            <person name="Vandenesch F."/>
            <person name="Kunst F."/>
            <person name="Etienne J."/>
            <person name="Glaser P."/>
            <person name="Buchrieser C."/>
        </authorList>
    </citation>
    <scope>NUCLEOTIDE SEQUENCE [LARGE SCALE GENOMIC DNA]</scope>
    <source>
        <strain>Paris</strain>
    </source>
</reference>
<accession>Q5X763</accession>
<name>CH10_LEGPA</name>
<feature type="chain" id="PRO_1000025289" description="Co-chaperonin GroES">
    <location>
        <begin position="1"/>
        <end position="96"/>
    </location>
</feature>